<protein>
    <recommendedName>
        <fullName evidence="2">Small ribosomal subunit protein uS9</fullName>
    </recommendedName>
    <alternativeName>
        <fullName>30S ribosomal protein S9</fullName>
    </alternativeName>
</protein>
<gene>
    <name type="primary">rpsI</name>
    <name type="ordered locus">Z4588</name>
    <name type="ordered locus">ECs4103</name>
</gene>
<proteinExistence type="inferred from homology"/>
<evidence type="ECO:0000250" key="1"/>
<evidence type="ECO:0000305" key="2"/>
<accession>P0A7X5</accession>
<accession>P02363</accession>
<comment type="subunit">
    <text evidence="1">Part of the 30S ribosomal subunit. Cross-links to the P site tRNA and weakly to the A site tRNA (By similarity).</text>
</comment>
<comment type="similarity">
    <text evidence="2">Belongs to the universal ribosomal protein uS9 family.</text>
</comment>
<dbReference type="EMBL" id="AE005174">
    <property type="protein sequence ID" value="AAG58358.1"/>
    <property type="molecule type" value="Genomic_DNA"/>
</dbReference>
<dbReference type="EMBL" id="BA000007">
    <property type="protein sequence ID" value="BAB37526.1"/>
    <property type="molecule type" value="Genomic_DNA"/>
</dbReference>
<dbReference type="PIR" id="B85987">
    <property type="entry name" value="B85987"/>
</dbReference>
<dbReference type="PIR" id="G91141">
    <property type="entry name" value="G91141"/>
</dbReference>
<dbReference type="RefSeq" id="NP_312130.1">
    <property type="nucleotide sequence ID" value="NC_002695.1"/>
</dbReference>
<dbReference type="RefSeq" id="WP_000829818.1">
    <property type="nucleotide sequence ID" value="NZ_VOAI01000014.1"/>
</dbReference>
<dbReference type="SMR" id="P0A7X5"/>
<dbReference type="STRING" id="155864.Z4588"/>
<dbReference type="GeneID" id="916048"/>
<dbReference type="GeneID" id="98390344"/>
<dbReference type="KEGG" id="ece:Z4588"/>
<dbReference type="KEGG" id="ecs:ECs_4103"/>
<dbReference type="PATRIC" id="fig|386585.9.peg.4284"/>
<dbReference type="eggNOG" id="COG0103">
    <property type="taxonomic scope" value="Bacteria"/>
</dbReference>
<dbReference type="HOGENOM" id="CLU_046483_2_1_6"/>
<dbReference type="OMA" id="KFQFSKR"/>
<dbReference type="Proteomes" id="UP000000558">
    <property type="component" value="Chromosome"/>
</dbReference>
<dbReference type="Proteomes" id="UP000002519">
    <property type="component" value="Chromosome"/>
</dbReference>
<dbReference type="GO" id="GO:0022627">
    <property type="term" value="C:cytosolic small ribosomal subunit"/>
    <property type="evidence" value="ECO:0007669"/>
    <property type="project" value="TreeGrafter"/>
</dbReference>
<dbReference type="GO" id="GO:0003735">
    <property type="term" value="F:structural constituent of ribosome"/>
    <property type="evidence" value="ECO:0007669"/>
    <property type="project" value="InterPro"/>
</dbReference>
<dbReference type="GO" id="GO:0000049">
    <property type="term" value="F:tRNA binding"/>
    <property type="evidence" value="ECO:0007669"/>
    <property type="project" value="UniProtKB-KW"/>
</dbReference>
<dbReference type="GO" id="GO:0006412">
    <property type="term" value="P:translation"/>
    <property type="evidence" value="ECO:0007669"/>
    <property type="project" value="UniProtKB-UniRule"/>
</dbReference>
<dbReference type="FunFam" id="3.30.230.10:FF:000001">
    <property type="entry name" value="30S ribosomal protein S9"/>
    <property type="match status" value="1"/>
</dbReference>
<dbReference type="Gene3D" id="3.30.230.10">
    <property type="match status" value="1"/>
</dbReference>
<dbReference type="HAMAP" id="MF_00532_B">
    <property type="entry name" value="Ribosomal_uS9_B"/>
    <property type="match status" value="1"/>
</dbReference>
<dbReference type="InterPro" id="IPR020568">
    <property type="entry name" value="Ribosomal_Su5_D2-typ_SF"/>
</dbReference>
<dbReference type="InterPro" id="IPR000754">
    <property type="entry name" value="Ribosomal_uS9"/>
</dbReference>
<dbReference type="InterPro" id="IPR023035">
    <property type="entry name" value="Ribosomal_uS9_bac/plastid"/>
</dbReference>
<dbReference type="InterPro" id="IPR020574">
    <property type="entry name" value="Ribosomal_uS9_CS"/>
</dbReference>
<dbReference type="InterPro" id="IPR014721">
    <property type="entry name" value="Ribsml_uS5_D2-typ_fold_subgr"/>
</dbReference>
<dbReference type="NCBIfam" id="NF001099">
    <property type="entry name" value="PRK00132.1"/>
    <property type="match status" value="1"/>
</dbReference>
<dbReference type="PANTHER" id="PTHR21569">
    <property type="entry name" value="RIBOSOMAL PROTEIN S9"/>
    <property type="match status" value="1"/>
</dbReference>
<dbReference type="PANTHER" id="PTHR21569:SF1">
    <property type="entry name" value="SMALL RIBOSOMAL SUBUNIT PROTEIN US9M"/>
    <property type="match status" value="1"/>
</dbReference>
<dbReference type="Pfam" id="PF00380">
    <property type="entry name" value="Ribosomal_S9"/>
    <property type="match status" value="1"/>
</dbReference>
<dbReference type="SUPFAM" id="SSF54211">
    <property type="entry name" value="Ribosomal protein S5 domain 2-like"/>
    <property type="match status" value="1"/>
</dbReference>
<dbReference type="PROSITE" id="PS00360">
    <property type="entry name" value="RIBOSOMAL_S9"/>
    <property type="match status" value="1"/>
</dbReference>
<organism>
    <name type="scientific">Escherichia coli O157:H7</name>
    <dbReference type="NCBI Taxonomy" id="83334"/>
    <lineage>
        <taxon>Bacteria</taxon>
        <taxon>Pseudomonadati</taxon>
        <taxon>Pseudomonadota</taxon>
        <taxon>Gammaproteobacteria</taxon>
        <taxon>Enterobacterales</taxon>
        <taxon>Enterobacteriaceae</taxon>
        <taxon>Escherichia</taxon>
    </lineage>
</organism>
<feature type="initiator methionine" description="Removed" evidence="1">
    <location>
        <position position="1"/>
    </location>
</feature>
<feature type="chain" id="PRO_0000111356" description="Small ribosomal subunit protein uS9">
    <location>
        <begin position="2"/>
        <end position="130"/>
    </location>
</feature>
<name>RS9_ECO57</name>
<keyword id="KW-1185">Reference proteome</keyword>
<keyword id="KW-0687">Ribonucleoprotein</keyword>
<keyword id="KW-0689">Ribosomal protein</keyword>
<keyword id="KW-0694">RNA-binding</keyword>
<keyword id="KW-0820">tRNA-binding</keyword>
<reference key="1">
    <citation type="journal article" date="2001" name="Nature">
        <title>Genome sequence of enterohaemorrhagic Escherichia coli O157:H7.</title>
        <authorList>
            <person name="Perna N.T."/>
            <person name="Plunkett G. III"/>
            <person name="Burland V."/>
            <person name="Mau B."/>
            <person name="Glasner J.D."/>
            <person name="Rose D.J."/>
            <person name="Mayhew G.F."/>
            <person name="Evans P.S."/>
            <person name="Gregor J."/>
            <person name="Kirkpatrick H.A."/>
            <person name="Posfai G."/>
            <person name="Hackett J."/>
            <person name="Klink S."/>
            <person name="Boutin A."/>
            <person name="Shao Y."/>
            <person name="Miller L."/>
            <person name="Grotbeck E.J."/>
            <person name="Davis N.W."/>
            <person name="Lim A."/>
            <person name="Dimalanta E.T."/>
            <person name="Potamousis K."/>
            <person name="Apodaca J."/>
            <person name="Anantharaman T.S."/>
            <person name="Lin J."/>
            <person name="Yen G."/>
            <person name="Schwartz D.C."/>
            <person name="Welch R.A."/>
            <person name="Blattner F.R."/>
        </authorList>
    </citation>
    <scope>NUCLEOTIDE SEQUENCE [LARGE SCALE GENOMIC DNA]</scope>
    <source>
        <strain>O157:H7 / EDL933 / ATCC 700927 / EHEC</strain>
    </source>
</reference>
<reference key="2">
    <citation type="journal article" date="2001" name="DNA Res.">
        <title>Complete genome sequence of enterohemorrhagic Escherichia coli O157:H7 and genomic comparison with a laboratory strain K-12.</title>
        <authorList>
            <person name="Hayashi T."/>
            <person name="Makino K."/>
            <person name="Ohnishi M."/>
            <person name="Kurokawa K."/>
            <person name="Ishii K."/>
            <person name="Yokoyama K."/>
            <person name="Han C.-G."/>
            <person name="Ohtsubo E."/>
            <person name="Nakayama K."/>
            <person name="Murata T."/>
            <person name="Tanaka M."/>
            <person name="Tobe T."/>
            <person name="Iida T."/>
            <person name="Takami H."/>
            <person name="Honda T."/>
            <person name="Sasakawa C."/>
            <person name="Ogasawara N."/>
            <person name="Yasunaga T."/>
            <person name="Kuhara S."/>
            <person name="Shiba T."/>
            <person name="Hattori M."/>
            <person name="Shinagawa H."/>
        </authorList>
    </citation>
    <scope>NUCLEOTIDE SEQUENCE [LARGE SCALE GENOMIC DNA]</scope>
    <source>
        <strain>O157:H7 / Sakai / RIMD 0509952 / EHEC</strain>
    </source>
</reference>
<sequence>MAENQYYGTGRRKSSAARVFIKPGNGKIVINQRSLEQYFGRETARMVVRQPLELVDMVEKLDLYITVKGGGISGQAGAIRHGITRALMEYDESLRSELRKAGFVTRDARQVERKKVGLRKARRRPQFSKR</sequence>